<feature type="chain" id="PRO_0000253981" description="Anaphase-promoting complex subunit 13">
    <location>
        <begin position="1"/>
        <end position="74"/>
    </location>
</feature>
<feature type="region of interest" description="Disordered" evidence="2">
    <location>
        <begin position="33"/>
        <end position="56"/>
    </location>
</feature>
<sequence>MDSEVQRDGRILDLIDDAWREDKLPYEDVAIPLSELPEPEQDNGGTTESVKEQEMKWTDLALQGLHENVPPAGN</sequence>
<keyword id="KW-0131">Cell cycle</keyword>
<keyword id="KW-0132">Cell division</keyword>
<keyword id="KW-0498">Mitosis</keyword>
<keyword id="KW-0539">Nucleus</keyword>
<keyword id="KW-1185">Reference proteome</keyword>
<keyword id="KW-0833">Ubl conjugation pathway</keyword>
<organism>
    <name type="scientific">Mus musculus</name>
    <name type="common">Mouse</name>
    <dbReference type="NCBI Taxonomy" id="10090"/>
    <lineage>
        <taxon>Eukaryota</taxon>
        <taxon>Metazoa</taxon>
        <taxon>Chordata</taxon>
        <taxon>Craniata</taxon>
        <taxon>Vertebrata</taxon>
        <taxon>Euteleostomi</taxon>
        <taxon>Mammalia</taxon>
        <taxon>Eutheria</taxon>
        <taxon>Euarchontoglires</taxon>
        <taxon>Glires</taxon>
        <taxon>Rodentia</taxon>
        <taxon>Myomorpha</taxon>
        <taxon>Muroidea</taxon>
        <taxon>Muridae</taxon>
        <taxon>Murinae</taxon>
        <taxon>Mus</taxon>
        <taxon>Mus</taxon>
    </lineage>
</organism>
<reference key="1">
    <citation type="journal article" date="2005" name="Science">
        <title>The transcriptional landscape of the mammalian genome.</title>
        <authorList>
            <person name="Carninci P."/>
            <person name="Kasukawa T."/>
            <person name="Katayama S."/>
            <person name="Gough J."/>
            <person name="Frith M.C."/>
            <person name="Maeda N."/>
            <person name="Oyama R."/>
            <person name="Ravasi T."/>
            <person name="Lenhard B."/>
            <person name="Wells C."/>
            <person name="Kodzius R."/>
            <person name="Shimokawa K."/>
            <person name="Bajic V.B."/>
            <person name="Brenner S.E."/>
            <person name="Batalov S."/>
            <person name="Forrest A.R."/>
            <person name="Zavolan M."/>
            <person name="Davis M.J."/>
            <person name="Wilming L.G."/>
            <person name="Aidinis V."/>
            <person name="Allen J.E."/>
            <person name="Ambesi-Impiombato A."/>
            <person name="Apweiler R."/>
            <person name="Aturaliya R.N."/>
            <person name="Bailey T.L."/>
            <person name="Bansal M."/>
            <person name="Baxter L."/>
            <person name="Beisel K.W."/>
            <person name="Bersano T."/>
            <person name="Bono H."/>
            <person name="Chalk A.M."/>
            <person name="Chiu K.P."/>
            <person name="Choudhary V."/>
            <person name="Christoffels A."/>
            <person name="Clutterbuck D.R."/>
            <person name="Crowe M.L."/>
            <person name="Dalla E."/>
            <person name="Dalrymple B.P."/>
            <person name="de Bono B."/>
            <person name="Della Gatta G."/>
            <person name="di Bernardo D."/>
            <person name="Down T."/>
            <person name="Engstrom P."/>
            <person name="Fagiolini M."/>
            <person name="Faulkner G."/>
            <person name="Fletcher C.F."/>
            <person name="Fukushima T."/>
            <person name="Furuno M."/>
            <person name="Futaki S."/>
            <person name="Gariboldi M."/>
            <person name="Georgii-Hemming P."/>
            <person name="Gingeras T.R."/>
            <person name="Gojobori T."/>
            <person name="Green R.E."/>
            <person name="Gustincich S."/>
            <person name="Harbers M."/>
            <person name="Hayashi Y."/>
            <person name="Hensch T.K."/>
            <person name="Hirokawa N."/>
            <person name="Hill D."/>
            <person name="Huminiecki L."/>
            <person name="Iacono M."/>
            <person name="Ikeo K."/>
            <person name="Iwama A."/>
            <person name="Ishikawa T."/>
            <person name="Jakt M."/>
            <person name="Kanapin A."/>
            <person name="Katoh M."/>
            <person name="Kawasawa Y."/>
            <person name="Kelso J."/>
            <person name="Kitamura H."/>
            <person name="Kitano H."/>
            <person name="Kollias G."/>
            <person name="Krishnan S.P."/>
            <person name="Kruger A."/>
            <person name="Kummerfeld S.K."/>
            <person name="Kurochkin I.V."/>
            <person name="Lareau L.F."/>
            <person name="Lazarevic D."/>
            <person name="Lipovich L."/>
            <person name="Liu J."/>
            <person name="Liuni S."/>
            <person name="McWilliam S."/>
            <person name="Madan Babu M."/>
            <person name="Madera M."/>
            <person name="Marchionni L."/>
            <person name="Matsuda H."/>
            <person name="Matsuzawa S."/>
            <person name="Miki H."/>
            <person name="Mignone F."/>
            <person name="Miyake S."/>
            <person name="Morris K."/>
            <person name="Mottagui-Tabar S."/>
            <person name="Mulder N."/>
            <person name="Nakano N."/>
            <person name="Nakauchi H."/>
            <person name="Ng P."/>
            <person name="Nilsson R."/>
            <person name="Nishiguchi S."/>
            <person name="Nishikawa S."/>
            <person name="Nori F."/>
            <person name="Ohara O."/>
            <person name="Okazaki Y."/>
            <person name="Orlando V."/>
            <person name="Pang K.C."/>
            <person name="Pavan W.J."/>
            <person name="Pavesi G."/>
            <person name="Pesole G."/>
            <person name="Petrovsky N."/>
            <person name="Piazza S."/>
            <person name="Reed J."/>
            <person name="Reid J.F."/>
            <person name="Ring B.Z."/>
            <person name="Ringwald M."/>
            <person name="Rost B."/>
            <person name="Ruan Y."/>
            <person name="Salzberg S.L."/>
            <person name="Sandelin A."/>
            <person name="Schneider C."/>
            <person name="Schoenbach C."/>
            <person name="Sekiguchi K."/>
            <person name="Semple C.A."/>
            <person name="Seno S."/>
            <person name="Sessa L."/>
            <person name="Sheng Y."/>
            <person name="Shibata Y."/>
            <person name="Shimada H."/>
            <person name="Shimada K."/>
            <person name="Silva D."/>
            <person name="Sinclair B."/>
            <person name="Sperling S."/>
            <person name="Stupka E."/>
            <person name="Sugiura K."/>
            <person name="Sultana R."/>
            <person name="Takenaka Y."/>
            <person name="Taki K."/>
            <person name="Tammoja K."/>
            <person name="Tan S.L."/>
            <person name="Tang S."/>
            <person name="Taylor M.S."/>
            <person name="Tegner J."/>
            <person name="Teichmann S.A."/>
            <person name="Ueda H.R."/>
            <person name="van Nimwegen E."/>
            <person name="Verardo R."/>
            <person name="Wei C.L."/>
            <person name="Yagi K."/>
            <person name="Yamanishi H."/>
            <person name="Zabarovsky E."/>
            <person name="Zhu S."/>
            <person name="Zimmer A."/>
            <person name="Hide W."/>
            <person name="Bult C."/>
            <person name="Grimmond S.M."/>
            <person name="Teasdale R.D."/>
            <person name="Liu E.T."/>
            <person name="Brusic V."/>
            <person name="Quackenbush J."/>
            <person name="Wahlestedt C."/>
            <person name="Mattick J.S."/>
            <person name="Hume D.A."/>
            <person name="Kai C."/>
            <person name="Sasaki D."/>
            <person name="Tomaru Y."/>
            <person name="Fukuda S."/>
            <person name="Kanamori-Katayama M."/>
            <person name="Suzuki M."/>
            <person name="Aoki J."/>
            <person name="Arakawa T."/>
            <person name="Iida J."/>
            <person name="Imamura K."/>
            <person name="Itoh M."/>
            <person name="Kato T."/>
            <person name="Kawaji H."/>
            <person name="Kawagashira N."/>
            <person name="Kawashima T."/>
            <person name="Kojima M."/>
            <person name="Kondo S."/>
            <person name="Konno H."/>
            <person name="Nakano K."/>
            <person name="Ninomiya N."/>
            <person name="Nishio T."/>
            <person name="Okada M."/>
            <person name="Plessy C."/>
            <person name="Shibata K."/>
            <person name="Shiraki T."/>
            <person name="Suzuki S."/>
            <person name="Tagami M."/>
            <person name="Waki K."/>
            <person name="Watahiki A."/>
            <person name="Okamura-Oho Y."/>
            <person name="Suzuki H."/>
            <person name="Kawai J."/>
            <person name="Hayashizaki Y."/>
        </authorList>
    </citation>
    <scope>NUCLEOTIDE SEQUENCE [LARGE SCALE MRNA]</scope>
    <source>
        <strain>C57BL/6J</strain>
        <tissue>Pancreas</tissue>
    </source>
</reference>
<reference key="2">
    <citation type="journal article" date="2004" name="Genome Res.">
        <title>The status, quality, and expansion of the NIH full-length cDNA project: the Mammalian Gene Collection (MGC).</title>
        <authorList>
            <consortium name="The MGC Project Team"/>
        </authorList>
    </citation>
    <scope>NUCLEOTIDE SEQUENCE [LARGE SCALE MRNA]</scope>
    <source>
        <tissue>Mammary gland</tissue>
    </source>
</reference>
<comment type="function">
    <text evidence="1">Component of the anaphase promoting complex/cyclosome (APC/C), a cell cycle-regulated E3 ubiquitin ligase that controls progression through mitosis and the G1 phase of the cell cycle. The APC/C complex acts by mediating ubiquitination and subsequent degradation of target proteins: it mainly mediates the formation of 'Lys-11'-linked polyubiquitin chains and, to a lower extent, the formation of 'Lys-48'- and 'Lys-63'-linked polyubiquitin chains. The APC/C complex catalyzes assembly of branched 'Lys-11'-/'Lys-48'-linked branched ubiquitin chains on target proteins.</text>
</comment>
<comment type="pathway">
    <text evidence="1">Protein modification; protein ubiquitination.</text>
</comment>
<comment type="subunit">
    <text evidence="1">The mammalian APC/C is composed at least of 14 distinct subunits ANAPC1, ANAPC2, CDC27/APC3, ANAPC4, ANAPC5, CDC16/APC6, ANAPC7, CDC23/APC8, ANAPC10, ANAPC11, CDC26/APC12, ANAPC13, ANAPC15 and ANAPC16 that assemble into a complex of at least 19 chains with a combined molecular mass of around 1.2 MDa; APC/C interacts with FZR1 and FBXO5.</text>
</comment>
<comment type="subcellular location">
    <subcellularLocation>
        <location evidence="3">Nucleus</location>
    </subcellularLocation>
</comment>
<comment type="similarity">
    <text evidence="3">Belongs to the APC13 family.</text>
</comment>
<gene>
    <name type="primary">Anapc13</name>
</gene>
<accession>Q8R034</accession>
<protein>
    <recommendedName>
        <fullName>Anaphase-promoting complex subunit 13</fullName>
        <shortName>APC13</shortName>
    </recommendedName>
    <alternativeName>
        <fullName>Cyclosome subunit 13</fullName>
    </alternativeName>
</protein>
<evidence type="ECO:0000250" key="1">
    <source>
        <dbReference type="UniProtKB" id="Q9BS18"/>
    </source>
</evidence>
<evidence type="ECO:0000256" key="2">
    <source>
        <dbReference type="SAM" id="MobiDB-lite"/>
    </source>
</evidence>
<evidence type="ECO:0000305" key="3"/>
<dbReference type="EMBL" id="AK007332">
    <property type="protein sequence ID" value="BAC25171.1"/>
    <property type="molecule type" value="mRNA"/>
</dbReference>
<dbReference type="EMBL" id="BC028526">
    <property type="protein sequence ID" value="AAH28526.1"/>
    <property type="molecule type" value="mRNA"/>
</dbReference>
<dbReference type="CCDS" id="CCDS40744.1"/>
<dbReference type="RefSeq" id="NP_852059.1">
    <property type="nucleotide sequence ID" value="NM_181394.3"/>
</dbReference>
<dbReference type="RefSeq" id="XP_006511869.1">
    <property type="nucleotide sequence ID" value="XM_006511806.4"/>
</dbReference>
<dbReference type="RefSeq" id="XP_006511870.1">
    <property type="nucleotide sequence ID" value="XM_006511807.5"/>
</dbReference>
<dbReference type="RefSeq" id="XP_036011127.1">
    <property type="nucleotide sequence ID" value="XM_036155234.1"/>
</dbReference>
<dbReference type="SMR" id="Q8R034"/>
<dbReference type="BioGRID" id="213171">
    <property type="interactions" value="28"/>
</dbReference>
<dbReference type="FunCoup" id="Q8R034">
    <property type="interactions" value="557"/>
</dbReference>
<dbReference type="IntAct" id="Q8R034">
    <property type="interactions" value="25"/>
</dbReference>
<dbReference type="STRING" id="10090.ENSMUSP00000140325"/>
<dbReference type="PhosphoSitePlus" id="Q8R034"/>
<dbReference type="PaxDb" id="10090-ENSMUSP00000140967"/>
<dbReference type="PeptideAtlas" id="Q8R034"/>
<dbReference type="ProteomicsDB" id="296265"/>
<dbReference type="Pumba" id="Q8R034"/>
<dbReference type="Antibodypedia" id="49243">
    <property type="antibodies" value="77 antibodies from 25 providers"/>
</dbReference>
<dbReference type="Ensembl" id="ENSMUST00000038673.14">
    <property type="protein sequence ID" value="ENSMUSP00000039761.8"/>
    <property type="gene ID" value="ENSMUSG00000035048.14"/>
</dbReference>
<dbReference type="Ensembl" id="ENSMUST00000186693.2">
    <property type="protein sequence ID" value="ENSMUSP00000139762.2"/>
    <property type="gene ID" value="ENSMUSG00000035048.14"/>
</dbReference>
<dbReference type="Ensembl" id="ENSMUST00000188398.7">
    <property type="protein sequence ID" value="ENSMUSP00000140325.2"/>
    <property type="gene ID" value="ENSMUSG00000035048.14"/>
</dbReference>
<dbReference type="Ensembl" id="ENSMUST00000190279.7">
    <property type="protein sequence ID" value="ENSMUSP00000140967.2"/>
    <property type="gene ID" value="ENSMUSG00000035048.14"/>
</dbReference>
<dbReference type="GeneID" id="69010"/>
<dbReference type="KEGG" id="mmu:69010"/>
<dbReference type="UCSC" id="uc009rft.2">
    <property type="organism name" value="mouse"/>
</dbReference>
<dbReference type="AGR" id="MGI:1916260"/>
<dbReference type="CTD" id="25847"/>
<dbReference type="MGI" id="MGI:1916260">
    <property type="gene designation" value="Anapc13"/>
</dbReference>
<dbReference type="VEuPathDB" id="HostDB:ENSMUSG00000035048"/>
<dbReference type="eggNOG" id="ENOG502S4J1">
    <property type="taxonomic scope" value="Eukaryota"/>
</dbReference>
<dbReference type="GeneTree" id="ENSGT00390000008673"/>
<dbReference type="HOGENOM" id="CLU_199969_0_0_1"/>
<dbReference type="InParanoid" id="Q8R034"/>
<dbReference type="OMA" id="PHDDIAV"/>
<dbReference type="OrthoDB" id="25675at2759"/>
<dbReference type="PhylomeDB" id="Q8R034"/>
<dbReference type="TreeFam" id="TF105448"/>
<dbReference type="Reactome" id="R-MMU-983168">
    <property type="pathway name" value="Antigen processing: Ubiquitination &amp; Proteasome degradation"/>
</dbReference>
<dbReference type="UniPathway" id="UPA00143"/>
<dbReference type="BioGRID-ORCS" id="69010">
    <property type="hits" value="18 hits in 73 CRISPR screens"/>
</dbReference>
<dbReference type="ChiTaRS" id="Anapc13">
    <property type="organism name" value="mouse"/>
</dbReference>
<dbReference type="PRO" id="PR:Q8R034"/>
<dbReference type="Proteomes" id="UP000000589">
    <property type="component" value="Chromosome 9"/>
</dbReference>
<dbReference type="RNAct" id="Q8R034">
    <property type="molecule type" value="protein"/>
</dbReference>
<dbReference type="Bgee" id="ENSMUSG00000035048">
    <property type="expression patterns" value="Expressed in embryonic brain and 266 other cell types or tissues"/>
</dbReference>
<dbReference type="GO" id="GO:0005680">
    <property type="term" value="C:anaphase-promoting complex"/>
    <property type="evidence" value="ECO:0000250"/>
    <property type="project" value="UniProtKB"/>
</dbReference>
<dbReference type="GO" id="GO:0031145">
    <property type="term" value="P:anaphase-promoting complex-dependent catabolic process"/>
    <property type="evidence" value="ECO:0000250"/>
    <property type="project" value="UniProtKB"/>
</dbReference>
<dbReference type="GO" id="GO:0051301">
    <property type="term" value="P:cell division"/>
    <property type="evidence" value="ECO:0007669"/>
    <property type="project" value="UniProtKB-KW"/>
</dbReference>
<dbReference type="GO" id="GO:0141198">
    <property type="term" value="P:protein branched polyubiquitination"/>
    <property type="evidence" value="ECO:0000250"/>
    <property type="project" value="UniProtKB"/>
</dbReference>
<dbReference type="GO" id="GO:0070979">
    <property type="term" value="P:protein K11-linked ubiquitination"/>
    <property type="evidence" value="ECO:0000250"/>
    <property type="project" value="UniProtKB"/>
</dbReference>
<dbReference type="GO" id="GO:0070936">
    <property type="term" value="P:protein K48-linked ubiquitination"/>
    <property type="evidence" value="ECO:0000250"/>
    <property type="project" value="UniProtKB"/>
</dbReference>
<dbReference type="InterPro" id="IPR008401">
    <property type="entry name" value="Apc13"/>
</dbReference>
<dbReference type="PANTHER" id="PTHR28672">
    <property type="entry name" value="ANAPHASE-PROMOTING COMPLEX SUBUNIT 13"/>
    <property type="match status" value="1"/>
</dbReference>
<dbReference type="PANTHER" id="PTHR28672:SF1">
    <property type="entry name" value="ANAPHASE-PROMOTING COMPLEX SUBUNIT 13"/>
    <property type="match status" value="1"/>
</dbReference>
<dbReference type="Pfam" id="PF05839">
    <property type="entry name" value="Apc13p"/>
    <property type="match status" value="1"/>
</dbReference>
<proteinExistence type="inferred from homology"/>
<name>APC13_MOUSE</name>